<evidence type="ECO:0000255" key="1">
    <source>
        <dbReference type="HAMAP-Rule" id="MF_00303"/>
    </source>
</evidence>
<comment type="function">
    <text evidence="1">Involved in protein export. Acts as a chaperone by maintaining the newly synthesized protein in an open conformation. Functions as a peptidyl-prolyl cis-trans isomerase.</text>
</comment>
<comment type="catalytic activity">
    <reaction evidence="1">
        <text>[protein]-peptidylproline (omega=180) = [protein]-peptidylproline (omega=0)</text>
        <dbReference type="Rhea" id="RHEA:16237"/>
        <dbReference type="Rhea" id="RHEA-COMP:10747"/>
        <dbReference type="Rhea" id="RHEA-COMP:10748"/>
        <dbReference type="ChEBI" id="CHEBI:83833"/>
        <dbReference type="ChEBI" id="CHEBI:83834"/>
        <dbReference type="EC" id="5.2.1.8"/>
    </reaction>
</comment>
<comment type="subcellular location">
    <subcellularLocation>
        <location>Cytoplasm</location>
    </subcellularLocation>
    <text evidence="1">About half TF is bound to the ribosome near the polypeptide exit tunnel while the other half is free in the cytoplasm.</text>
</comment>
<comment type="domain">
    <text evidence="1">Consists of 3 domains; the N-terminus binds the ribosome, the middle domain has PPIase activity, while the C-terminus has intrinsic chaperone activity on its own.</text>
</comment>
<comment type="similarity">
    <text evidence="1">Belongs to the FKBP-type PPIase family. Tig subfamily.</text>
</comment>
<gene>
    <name evidence="1" type="primary">tig</name>
    <name type="ordered locus">CLM_3644</name>
</gene>
<protein>
    <recommendedName>
        <fullName evidence="1">Trigger factor</fullName>
        <shortName evidence="1">TF</shortName>
        <ecNumber evidence="1">5.2.1.8</ecNumber>
    </recommendedName>
    <alternativeName>
        <fullName evidence="1">PPIase</fullName>
    </alternativeName>
</protein>
<sequence>MNVKVENIEKNVVKLEITVDSEKFNEAVKKSFKKNAKRFNVPGFRKGKAPLNIIKKYYGEGVLFEDAINFCCEDTYPKAIEENNIKPVDYPQIDVVQIGEGKDFIYTAEVTTVPKVKLGEYKGVEVKKVSYEVEDEAVENELKSMQEKNARVSLKEEGEIEKGNIAIIDFKGYVDGKAFEGGEAKDYEIEIGSGTFIGDFEDQLVGLKKDESKEVNVSFPEEYGREDLNGKPATFEVTIKDIKVKELPALDDEFAKEVSEFDTLEELKSDIKDRMKKELSEKAKAEYEEAVVEAVGANAEIEIPKVMIEKEIENMVRDLEMRLKYQGLDLKSYYEFTNSSEEKVKEYMRETAEKRVKTDLIMQEIAKVEDIKATEEELKEKAMEVAKQYGQKDVEKTAELIANAQKAYLEIDIVNGKVLDLLVESSKEIA</sequence>
<reference key="1">
    <citation type="submission" date="2008-10" db="EMBL/GenBank/DDBJ databases">
        <title>Genome sequence of Clostridium botulinum A2 Kyoto.</title>
        <authorList>
            <person name="Shrivastava S."/>
            <person name="Brinkac L.M."/>
            <person name="Brown J.L."/>
            <person name="Bruce D."/>
            <person name="Detter C.C."/>
            <person name="Johnson E.A."/>
            <person name="Munk C.A."/>
            <person name="Smith L.A."/>
            <person name="Smith T.J."/>
            <person name="Sutton G."/>
            <person name="Brettin T.S."/>
        </authorList>
    </citation>
    <scope>NUCLEOTIDE SEQUENCE [LARGE SCALE GENOMIC DNA]</scope>
    <source>
        <strain>Kyoto / Type A2</strain>
    </source>
</reference>
<dbReference type="EC" id="5.2.1.8" evidence="1"/>
<dbReference type="EMBL" id="CP001581">
    <property type="protein sequence ID" value="ACO86378.1"/>
    <property type="molecule type" value="Genomic_DNA"/>
</dbReference>
<dbReference type="RefSeq" id="WP_003357493.1">
    <property type="nucleotide sequence ID" value="NC_012563.1"/>
</dbReference>
<dbReference type="SMR" id="C1FLA7"/>
<dbReference type="KEGG" id="cby:CLM_3644"/>
<dbReference type="eggNOG" id="COG0544">
    <property type="taxonomic scope" value="Bacteria"/>
</dbReference>
<dbReference type="HOGENOM" id="CLU_033058_3_2_9"/>
<dbReference type="Proteomes" id="UP000001374">
    <property type="component" value="Chromosome"/>
</dbReference>
<dbReference type="GO" id="GO:0005737">
    <property type="term" value="C:cytoplasm"/>
    <property type="evidence" value="ECO:0007669"/>
    <property type="project" value="UniProtKB-SubCell"/>
</dbReference>
<dbReference type="GO" id="GO:0003755">
    <property type="term" value="F:peptidyl-prolyl cis-trans isomerase activity"/>
    <property type="evidence" value="ECO:0007669"/>
    <property type="project" value="UniProtKB-UniRule"/>
</dbReference>
<dbReference type="GO" id="GO:0044183">
    <property type="term" value="F:protein folding chaperone"/>
    <property type="evidence" value="ECO:0007669"/>
    <property type="project" value="TreeGrafter"/>
</dbReference>
<dbReference type="GO" id="GO:0043022">
    <property type="term" value="F:ribosome binding"/>
    <property type="evidence" value="ECO:0007669"/>
    <property type="project" value="TreeGrafter"/>
</dbReference>
<dbReference type="GO" id="GO:0051083">
    <property type="term" value="P:'de novo' cotranslational protein folding"/>
    <property type="evidence" value="ECO:0007669"/>
    <property type="project" value="TreeGrafter"/>
</dbReference>
<dbReference type="GO" id="GO:0051301">
    <property type="term" value="P:cell division"/>
    <property type="evidence" value="ECO:0007669"/>
    <property type="project" value="UniProtKB-KW"/>
</dbReference>
<dbReference type="GO" id="GO:0061077">
    <property type="term" value="P:chaperone-mediated protein folding"/>
    <property type="evidence" value="ECO:0007669"/>
    <property type="project" value="TreeGrafter"/>
</dbReference>
<dbReference type="GO" id="GO:0015031">
    <property type="term" value="P:protein transport"/>
    <property type="evidence" value="ECO:0007669"/>
    <property type="project" value="UniProtKB-UniRule"/>
</dbReference>
<dbReference type="GO" id="GO:0043335">
    <property type="term" value="P:protein unfolding"/>
    <property type="evidence" value="ECO:0007669"/>
    <property type="project" value="TreeGrafter"/>
</dbReference>
<dbReference type="FunFam" id="1.10.3120.10:FF:000010">
    <property type="entry name" value="Trigger factor"/>
    <property type="match status" value="1"/>
</dbReference>
<dbReference type="FunFam" id="3.10.50.40:FF:000001">
    <property type="entry name" value="Trigger factor"/>
    <property type="match status" value="1"/>
</dbReference>
<dbReference type="Gene3D" id="3.10.50.40">
    <property type="match status" value="1"/>
</dbReference>
<dbReference type="Gene3D" id="3.30.70.1050">
    <property type="entry name" value="Trigger factor ribosome-binding domain"/>
    <property type="match status" value="1"/>
</dbReference>
<dbReference type="Gene3D" id="1.10.3120.10">
    <property type="entry name" value="Trigger factor, C-terminal domain"/>
    <property type="match status" value="1"/>
</dbReference>
<dbReference type="HAMAP" id="MF_00303">
    <property type="entry name" value="Trigger_factor_Tig"/>
    <property type="match status" value="1"/>
</dbReference>
<dbReference type="InterPro" id="IPR046357">
    <property type="entry name" value="PPIase_dom_sf"/>
</dbReference>
<dbReference type="InterPro" id="IPR001179">
    <property type="entry name" value="PPIase_FKBP_dom"/>
</dbReference>
<dbReference type="InterPro" id="IPR005215">
    <property type="entry name" value="Trig_fac"/>
</dbReference>
<dbReference type="InterPro" id="IPR008880">
    <property type="entry name" value="Trigger_fac_C"/>
</dbReference>
<dbReference type="InterPro" id="IPR037041">
    <property type="entry name" value="Trigger_fac_C_sf"/>
</dbReference>
<dbReference type="InterPro" id="IPR008881">
    <property type="entry name" value="Trigger_fac_ribosome-bd_bac"/>
</dbReference>
<dbReference type="InterPro" id="IPR036611">
    <property type="entry name" value="Trigger_fac_ribosome-bd_sf"/>
</dbReference>
<dbReference type="InterPro" id="IPR027304">
    <property type="entry name" value="Trigger_fact/SurA_dom_sf"/>
</dbReference>
<dbReference type="NCBIfam" id="TIGR00115">
    <property type="entry name" value="tig"/>
    <property type="match status" value="1"/>
</dbReference>
<dbReference type="PANTHER" id="PTHR30560">
    <property type="entry name" value="TRIGGER FACTOR CHAPERONE AND PEPTIDYL-PROLYL CIS/TRANS ISOMERASE"/>
    <property type="match status" value="1"/>
</dbReference>
<dbReference type="PANTHER" id="PTHR30560:SF3">
    <property type="entry name" value="TRIGGER FACTOR-LIKE PROTEIN TIG, CHLOROPLASTIC"/>
    <property type="match status" value="1"/>
</dbReference>
<dbReference type="Pfam" id="PF00254">
    <property type="entry name" value="FKBP_C"/>
    <property type="match status" value="1"/>
</dbReference>
<dbReference type="Pfam" id="PF05698">
    <property type="entry name" value="Trigger_C"/>
    <property type="match status" value="1"/>
</dbReference>
<dbReference type="Pfam" id="PF05697">
    <property type="entry name" value="Trigger_N"/>
    <property type="match status" value="1"/>
</dbReference>
<dbReference type="PIRSF" id="PIRSF003095">
    <property type="entry name" value="Trigger_factor"/>
    <property type="match status" value="1"/>
</dbReference>
<dbReference type="SUPFAM" id="SSF54534">
    <property type="entry name" value="FKBP-like"/>
    <property type="match status" value="1"/>
</dbReference>
<dbReference type="SUPFAM" id="SSF109998">
    <property type="entry name" value="Triger factor/SurA peptide-binding domain-like"/>
    <property type="match status" value="1"/>
</dbReference>
<dbReference type="SUPFAM" id="SSF102735">
    <property type="entry name" value="Trigger factor ribosome-binding domain"/>
    <property type="match status" value="1"/>
</dbReference>
<dbReference type="PROSITE" id="PS50059">
    <property type="entry name" value="FKBP_PPIASE"/>
    <property type="match status" value="1"/>
</dbReference>
<proteinExistence type="inferred from homology"/>
<accession>C1FLA7</accession>
<keyword id="KW-0131">Cell cycle</keyword>
<keyword id="KW-0132">Cell division</keyword>
<keyword id="KW-0143">Chaperone</keyword>
<keyword id="KW-0963">Cytoplasm</keyword>
<keyword id="KW-0413">Isomerase</keyword>
<keyword id="KW-0697">Rotamase</keyword>
<organism>
    <name type="scientific">Clostridium botulinum (strain Kyoto / Type A2)</name>
    <dbReference type="NCBI Taxonomy" id="536232"/>
    <lineage>
        <taxon>Bacteria</taxon>
        <taxon>Bacillati</taxon>
        <taxon>Bacillota</taxon>
        <taxon>Clostridia</taxon>
        <taxon>Eubacteriales</taxon>
        <taxon>Clostridiaceae</taxon>
        <taxon>Clostridium</taxon>
    </lineage>
</organism>
<feature type="chain" id="PRO_1000198150" description="Trigger factor">
    <location>
        <begin position="1"/>
        <end position="430"/>
    </location>
</feature>
<feature type="domain" description="PPIase FKBP-type" evidence="1">
    <location>
        <begin position="163"/>
        <end position="248"/>
    </location>
</feature>
<name>TIG_CLOBJ</name>